<protein>
    <recommendedName>
        <fullName evidence="1">Large ribosomal subunit protein uL16</fullName>
    </recommendedName>
    <alternativeName>
        <fullName evidence="2">50S ribosomal protein L16</fullName>
    </alternativeName>
</protein>
<name>RL16_VIBCH</name>
<evidence type="ECO:0000255" key="1">
    <source>
        <dbReference type="HAMAP-Rule" id="MF_01342"/>
    </source>
</evidence>
<evidence type="ECO:0000305" key="2"/>
<accession>Q9KNZ1</accession>
<proteinExistence type="inferred from homology"/>
<dbReference type="EMBL" id="AE003852">
    <property type="protein sequence ID" value="AAF95730.1"/>
    <property type="molecule type" value="Genomic_DNA"/>
</dbReference>
<dbReference type="PIR" id="G82058">
    <property type="entry name" value="G82058"/>
</dbReference>
<dbReference type="RefSeq" id="NP_232217.1">
    <property type="nucleotide sequence ID" value="NC_002505.1"/>
</dbReference>
<dbReference type="RefSeq" id="WP_000941219.1">
    <property type="nucleotide sequence ID" value="NZ_LT906614.1"/>
</dbReference>
<dbReference type="SMR" id="Q9KNZ1"/>
<dbReference type="STRING" id="243277.VC_2589"/>
<dbReference type="DNASU" id="2615606"/>
<dbReference type="EnsemblBacteria" id="AAF95730">
    <property type="protein sequence ID" value="AAF95730"/>
    <property type="gene ID" value="VC_2589"/>
</dbReference>
<dbReference type="GeneID" id="69718807"/>
<dbReference type="KEGG" id="vch:VC_2589"/>
<dbReference type="PATRIC" id="fig|243277.26.peg.2468"/>
<dbReference type="eggNOG" id="COG0197">
    <property type="taxonomic scope" value="Bacteria"/>
</dbReference>
<dbReference type="HOGENOM" id="CLU_078858_2_1_6"/>
<dbReference type="Proteomes" id="UP000000584">
    <property type="component" value="Chromosome 1"/>
</dbReference>
<dbReference type="GO" id="GO:0022625">
    <property type="term" value="C:cytosolic large ribosomal subunit"/>
    <property type="evidence" value="ECO:0000318"/>
    <property type="project" value="GO_Central"/>
</dbReference>
<dbReference type="GO" id="GO:0019843">
    <property type="term" value="F:rRNA binding"/>
    <property type="evidence" value="ECO:0000318"/>
    <property type="project" value="GO_Central"/>
</dbReference>
<dbReference type="GO" id="GO:0003735">
    <property type="term" value="F:structural constituent of ribosome"/>
    <property type="evidence" value="ECO:0000318"/>
    <property type="project" value="GO_Central"/>
</dbReference>
<dbReference type="GO" id="GO:0000049">
    <property type="term" value="F:tRNA binding"/>
    <property type="evidence" value="ECO:0007669"/>
    <property type="project" value="UniProtKB-KW"/>
</dbReference>
<dbReference type="GO" id="GO:0006412">
    <property type="term" value="P:translation"/>
    <property type="evidence" value="ECO:0007669"/>
    <property type="project" value="UniProtKB-UniRule"/>
</dbReference>
<dbReference type="CDD" id="cd01433">
    <property type="entry name" value="Ribosomal_L16_L10e"/>
    <property type="match status" value="1"/>
</dbReference>
<dbReference type="FunFam" id="3.90.1170.10:FF:000001">
    <property type="entry name" value="50S ribosomal protein L16"/>
    <property type="match status" value="1"/>
</dbReference>
<dbReference type="Gene3D" id="3.90.1170.10">
    <property type="entry name" value="Ribosomal protein L10e/L16"/>
    <property type="match status" value="1"/>
</dbReference>
<dbReference type="HAMAP" id="MF_01342">
    <property type="entry name" value="Ribosomal_uL16"/>
    <property type="match status" value="1"/>
</dbReference>
<dbReference type="InterPro" id="IPR047873">
    <property type="entry name" value="Ribosomal_uL16"/>
</dbReference>
<dbReference type="InterPro" id="IPR000114">
    <property type="entry name" value="Ribosomal_uL16_bact-type"/>
</dbReference>
<dbReference type="InterPro" id="IPR020798">
    <property type="entry name" value="Ribosomal_uL16_CS"/>
</dbReference>
<dbReference type="InterPro" id="IPR016180">
    <property type="entry name" value="Ribosomal_uL16_dom"/>
</dbReference>
<dbReference type="InterPro" id="IPR036920">
    <property type="entry name" value="Ribosomal_uL16_sf"/>
</dbReference>
<dbReference type="NCBIfam" id="TIGR01164">
    <property type="entry name" value="rplP_bact"/>
    <property type="match status" value="1"/>
</dbReference>
<dbReference type="PANTHER" id="PTHR12220">
    <property type="entry name" value="50S/60S RIBOSOMAL PROTEIN L16"/>
    <property type="match status" value="1"/>
</dbReference>
<dbReference type="PANTHER" id="PTHR12220:SF13">
    <property type="entry name" value="LARGE RIBOSOMAL SUBUNIT PROTEIN UL16M"/>
    <property type="match status" value="1"/>
</dbReference>
<dbReference type="Pfam" id="PF00252">
    <property type="entry name" value="Ribosomal_L16"/>
    <property type="match status" value="1"/>
</dbReference>
<dbReference type="PRINTS" id="PR00060">
    <property type="entry name" value="RIBOSOMALL16"/>
</dbReference>
<dbReference type="SUPFAM" id="SSF54686">
    <property type="entry name" value="Ribosomal protein L16p/L10e"/>
    <property type="match status" value="1"/>
</dbReference>
<dbReference type="PROSITE" id="PS00586">
    <property type="entry name" value="RIBOSOMAL_L16_1"/>
    <property type="match status" value="1"/>
</dbReference>
<sequence>MLQPKRTKFRKVQTGRNRGLAKGTEVSFGTFGLKAVGRGRLTARQIEAARRAMTRHIKRQGKIWIRVFPDKPITEKPLEVRQGKGKGNVEYWVAQIQPGKVMYEVDGVPEELAREAFRLAARKLPFKTTFVTKQVM</sequence>
<feature type="chain" id="PRO_0000062244" description="Large ribosomal subunit protein uL16">
    <location>
        <begin position="1"/>
        <end position="136"/>
    </location>
</feature>
<comment type="function">
    <text evidence="1">Binds 23S rRNA and is also seen to make contacts with the A and possibly P site tRNAs.</text>
</comment>
<comment type="subunit">
    <text evidence="1">Part of the 50S ribosomal subunit.</text>
</comment>
<comment type="similarity">
    <text evidence="1">Belongs to the universal ribosomal protein uL16 family.</text>
</comment>
<organism>
    <name type="scientific">Vibrio cholerae serotype O1 (strain ATCC 39315 / El Tor Inaba N16961)</name>
    <dbReference type="NCBI Taxonomy" id="243277"/>
    <lineage>
        <taxon>Bacteria</taxon>
        <taxon>Pseudomonadati</taxon>
        <taxon>Pseudomonadota</taxon>
        <taxon>Gammaproteobacteria</taxon>
        <taxon>Vibrionales</taxon>
        <taxon>Vibrionaceae</taxon>
        <taxon>Vibrio</taxon>
    </lineage>
</organism>
<reference key="1">
    <citation type="journal article" date="2000" name="Nature">
        <title>DNA sequence of both chromosomes of the cholera pathogen Vibrio cholerae.</title>
        <authorList>
            <person name="Heidelberg J.F."/>
            <person name="Eisen J.A."/>
            <person name="Nelson W.C."/>
            <person name="Clayton R.A."/>
            <person name="Gwinn M.L."/>
            <person name="Dodson R.J."/>
            <person name="Haft D.H."/>
            <person name="Hickey E.K."/>
            <person name="Peterson J.D."/>
            <person name="Umayam L.A."/>
            <person name="Gill S.R."/>
            <person name="Nelson K.E."/>
            <person name="Read T.D."/>
            <person name="Tettelin H."/>
            <person name="Richardson D.L."/>
            <person name="Ermolaeva M.D."/>
            <person name="Vamathevan J.J."/>
            <person name="Bass S."/>
            <person name="Qin H."/>
            <person name="Dragoi I."/>
            <person name="Sellers P."/>
            <person name="McDonald L.A."/>
            <person name="Utterback T.R."/>
            <person name="Fleischmann R.D."/>
            <person name="Nierman W.C."/>
            <person name="White O."/>
            <person name="Salzberg S.L."/>
            <person name="Smith H.O."/>
            <person name="Colwell R.R."/>
            <person name="Mekalanos J.J."/>
            <person name="Venter J.C."/>
            <person name="Fraser C.M."/>
        </authorList>
    </citation>
    <scope>NUCLEOTIDE SEQUENCE [LARGE SCALE GENOMIC DNA]</scope>
    <source>
        <strain>ATCC 39315 / El Tor Inaba N16961</strain>
    </source>
</reference>
<gene>
    <name evidence="1" type="primary">rplP</name>
    <name type="ordered locus">VC_2589</name>
</gene>
<keyword id="KW-1185">Reference proteome</keyword>
<keyword id="KW-0687">Ribonucleoprotein</keyword>
<keyword id="KW-0689">Ribosomal protein</keyword>
<keyword id="KW-0694">RNA-binding</keyword>
<keyword id="KW-0699">rRNA-binding</keyword>
<keyword id="KW-0820">tRNA-binding</keyword>